<protein>
    <recommendedName>
        <fullName evidence="1">Large ribosomal subunit protein uL10</fullName>
    </recommendedName>
    <alternativeName>
        <fullName evidence="2">50S ribosomal protein L10</fullName>
    </alternativeName>
</protein>
<proteinExistence type="inferred from homology"/>
<dbReference type="EMBL" id="CP000961">
    <property type="protein sequence ID" value="ACA88949.1"/>
    <property type="molecule type" value="Genomic_DNA"/>
</dbReference>
<dbReference type="RefSeq" id="WP_012327268.1">
    <property type="nucleotide sequence ID" value="NC_010506.1"/>
</dbReference>
<dbReference type="STRING" id="392500.Swoo_4699"/>
<dbReference type="KEGG" id="swd:Swoo_4699"/>
<dbReference type="eggNOG" id="COG0244">
    <property type="taxonomic scope" value="Bacteria"/>
</dbReference>
<dbReference type="HOGENOM" id="CLU_092227_0_2_6"/>
<dbReference type="Proteomes" id="UP000002168">
    <property type="component" value="Chromosome"/>
</dbReference>
<dbReference type="GO" id="GO:0015934">
    <property type="term" value="C:large ribosomal subunit"/>
    <property type="evidence" value="ECO:0007669"/>
    <property type="project" value="InterPro"/>
</dbReference>
<dbReference type="GO" id="GO:0070180">
    <property type="term" value="F:large ribosomal subunit rRNA binding"/>
    <property type="evidence" value="ECO:0007669"/>
    <property type="project" value="UniProtKB-UniRule"/>
</dbReference>
<dbReference type="GO" id="GO:0003735">
    <property type="term" value="F:structural constituent of ribosome"/>
    <property type="evidence" value="ECO:0007669"/>
    <property type="project" value="InterPro"/>
</dbReference>
<dbReference type="GO" id="GO:0006412">
    <property type="term" value="P:translation"/>
    <property type="evidence" value="ECO:0007669"/>
    <property type="project" value="UniProtKB-UniRule"/>
</dbReference>
<dbReference type="CDD" id="cd05797">
    <property type="entry name" value="Ribosomal_L10"/>
    <property type="match status" value="1"/>
</dbReference>
<dbReference type="FunFam" id="3.30.70.1730:FF:000001">
    <property type="entry name" value="50S ribosomal protein L10"/>
    <property type="match status" value="1"/>
</dbReference>
<dbReference type="Gene3D" id="3.30.70.1730">
    <property type="match status" value="1"/>
</dbReference>
<dbReference type="Gene3D" id="6.10.250.2350">
    <property type="match status" value="1"/>
</dbReference>
<dbReference type="HAMAP" id="MF_00362">
    <property type="entry name" value="Ribosomal_uL10"/>
    <property type="match status" value="1"/>
</dbReference>
<dbReference type="InterPro" id="IPR001790">
    <property type="entry name" value="Ribosomal_uL10"/>
</dbReference>
<dbReference type="InterPro" id="IPR043141">
    <property type="entry name" value="Ribosomal_uL10-like_sf"/>
</dbReference>
<dbReference type="InterPro" id="IPR022973">
    <property type="entry name" value="Ribosomal_uL10_bac"/>
</dbReference>
<dbReference type="InterPro" id="IPR047865">
    <property type="entry name" value="Ribosomal_uL10_bac_type"/>
</dbReference>
<dbReference type="InterPro" id="IPR002363">
    <property type="entry name" value="Ribosomal_uL10_CS_bac"/>
</dbReference>
<dbReference type="NCBIfam" id="NF000955">
    <property type="entry name" value="PRK00099.1-1"/>
    <property type="match status" value="1"/>
</dbReference>
<dbReference type="PANTHER" id="PTHR11560">
    <property type="entry name" value="39S RIBOSOMAL PROTEIN L10, MITOCHONDRIAL"/>
    <property type="match status" value="1"/>
</dbReference>
<dbReference type="Pfam" id="PF00466">
    <property type="entry name" value="Ribosomal_L10"/>
    <property type="match status" value="1"/>
</dbReference>
<dbReference type="SUPFAM" id="SSF160369">
    <property type="entry name" value="Ribosomal protein L10-like"/>
    <property type="match status" value="1"/>
</dbReference>
<dbReference type="PROSITE" id="PS01109">
    <property type="entry name" value="RIBOSOMAL_L10"/>
    <property type="match status" value="1"/>
</dbReference>
<evidence type="ECO:0000255" key="1">
    <source>
        <dbReference type="HAMAP-Rule" id="MF_00362"/>
    </source>
</evidence>
<evidence type="ECO:0000305" key="2"/>
<sequence length="166" mass="17642">MALGLEDKKAIVAEVNEAAKGALSAVVADSRGVTVGEMTGLRRAAREAGVYVKVVRNTLVKRAVAGTDFECLSDTFTGPTLIAFSNEHPGAAARLLKDFATAQEKFEIKAAAFEGEVIPAADIDRLAKLPTYDEALAQLMMTMKEASAGKFVRLLAALRDQKEEAA</sequence>
<keyword id="KW-1185">Reference proteome</keyword>
<keyword id="KW-0687">Ribonucleoprotein</keyword>
<keyword id="KW-0689">Ribosomal protein</keyword>
<keyword id="KW-0694">RNA-binding</keyword>
<keyword id="KW-0699">rRNA-binding</keyword>
<accession>B1KMZ2</accession>
<name>RL10_SHEWM</name>
<comment type="function">
    <text evidence="1">Forms part of the ribosomal stalk, playing a central role in the interaction of the ribosome with GTP-bound translation factors.</text>
</comment>
<comment type="subunit">
    <text evidence="1">Part of the ribosomal stalk of the 50S ribosomal subunit. The N-terminus interacts with L11 and the large rRNA to form the base of the stalk. The C-terminus forms an elongated spine to which L12 dimers bind in a sequential fashion forming a multimeric L10(L12)X complex.</text>
</comment>
<comment type="similarity">
    <text evidence="1">Belongs to the universal ribosomal protein uL10 family.</text>
</comment>
<reference key="1">
    <citation type="submission" date="2008-02" db="EMBL/GenBank/DDBJ databases">
        <title>Complete sequence of Shewanella woodyi ATCC 51908.</title>
        <authorList>
            <consortium name="US DOE Joint Genome Institute"/>
            <person name="Copeland A."/>
            <person name="Lucas S."/>
            <person name="Lapidus A."/>
            <person name="Glavina del Rio T."/>
            <person name="Dalin E."/>
            <person name="Tice H."/>
            <person name="Bruce D."/>
            <person name="Goodwin L."/>
            <person name="Pitluck S."/>
            <person name="Sims D."/>
            <person name="Brettin T."/>
            <person name="Detter J.C."/>
            <person name="Han C."/>
            <person name="Kuske C.R."/>
            <person name="Schmutz J."/>
            <person name="Larimer F."/>
            <person name="Land M."/>
            <person name="Hauser L."/>
            <person name="Kyrpides N."/>
            <person name="Lykidis A."/>
            <person name="Zhao J.-S."/>
            <person name="Richardson P."/>
        </authorList>
    </citation>
    <scope>NUCLEOTIDE SEQUENCE [LARGE SCALE GENOMIC DNA]</scope>
    <source>
        <strain>ATCC 51908 / MS32</strain>
    </source>
</reference>
<gene>
    <name evidence="1" type="primary">rplJ</name>
    <name type="ordered locus">Swoo_4699</name>
</gene>
<feature type="chain" id="PRO_1000121015" description="Large ribosomal subunit protein uL10">
    <location>
        <begin position="1"/>
        <end position="166"/>
    </location>
</feature>
<organism>
    <name type="scientific">Shewanella woodyi (strain ATCC 51908 / MS32)</name>
    <dbReference type="NCBI Taxonomy" id="392500"/>
    <lineage>
        <taxon>Bacteria</taxon>
        <taxon>Pseudomonadati</taxon>
        <taxon>Pseudomonadota</taxon>
        <taxon>Gammaproteobacteria</taxon>
        <taxon>Alteromonadales</taxon>
        <taxon>Shewanellaceae</taxon>
        <taxon>Shewanella</taxon>
    </lineage>
</organism>